<dbReference type="EMBL" id="AAFC03102965">
    <property type="status" value="NOT_ANNOTATED_CDS"/>
    <property type="molecule type" value="Genomic_DNA"/>
</dbReference>
<dbReference type="EMBL" id="BC118149">
    <property type="status" value="NOT_ANNOTATED_CDS"/>
    <property type="molecule type" value="mRNA"/>
</dbReference>
<dbReference type="RefSeq" id="NP_001069169.2">
    <molecule id="Q17QW0-1"/>
    <property type="nucleotide sequence ID" value="NM_001075701.2"/>
</dbReference>
<dbReference type="SMR" id="Q17QW0"/>
<dbReference type="FunCoup" id="Q17QW0">
    <property type="interactions" value="157"/>
</dbReference>
<dbReference type="STRING" id="9913.ENSBTAP00000055590"/>
<dbReference type="PaxDb" id="9913-ENSBTAP00000055590"/>
<dbReference type="GeneID" id="515215"/>
<dbReference type="KEGG" id="bta:515215"/>
<dbReference type="CTD" id="79962"/>
<dbReference type="VEuPathDB" id="HostDB:ENSBTAG00000016398"/>
<dbReference type="eggNOG" id="KOG0714">
    <property type="taxonomic scope" value="Eukaryota"/>
</dbReference>
<dbReference type="HOGENOM" id="CLU_057927_1_0_1"/>
<dbReference type="InParanoid" id="Q17QW0"/>
<dbReference type="OMA" id="VWWHCLL"/>
<dbReference type="OrthoDB" id="10262359at2759"/>
<dbReference type="TreeFam" id="TF324581"/>
<dbReference type="Proteomes" id="UP000009136">
    <property type="component" value="Chromosome 5"/>
</dbReference>
<dbReference type="Bgee" id="ENSBTAG00000016398">
    <property type="expression patterns" value="Expressed in caput epididymis and 40 other cell types or tissues"/>
</dbReference>
<dbReference type="GO" id="GO:0016020">
    <property type="term" value="C:membrane"/>
    <property type="evidence" value="ECO:0000318"/>
    <property type="project" value="GO_Central"/>
</dbReference>
<dbReference type="CDD" id="cd06257">
    <property type="entry name" value="DnaJ"/>
    <property type="match status" value="1"/>
</dbReference>
<dbReference type="Gene3D" id="1.10.287.110">
    <property type="entry name" value="DnaJ domain"/>
    <property type="match status" value="1"/>
</dbReference>
<dbReference type="InterPro" id="IPR001623">
    <property type="entry name" value="DnaJ_domain"/>
</dbReference>
<dbReference type="InterPro" id="IPR036869">
    <property type="entry name" value="J_dom_sf"/>
</dbReference>
<dbReference type="InterPro" id="IPR007829">
    <property type="entry name" value="TM2"/>
</dbReference>
<dbReference type="PANTHER" id="PTHR44733">
    <property type="entry name" value="DNAJ HOMOLOG SUBFAMILY C MEMBER 22"/>
    <property type="match status" value="1"/>
</dbReference>
<dbReference type="PANTHER" id="PTHR44733:SF1">
    <property type="entry name" value="DNAJ HOMOLOG SUBFAMILY C MEMBER 22"/>
    <property type="match status" value="1"/>
</dbReference>
<dbReference type="Pfam" id="PF00226">
    <property type="entry name" value="DnaJ"/>
    <property type="match status" value="1"/>
</dbReference>
<dbReference type="Pfam" id="PF05154">
    <property type="entry name" value="TM2"/>
    <property type="match status" value="1"/>
</dbReference>
<dbReference type="PRINTS" id="PR00625">
    <property type="entry name" value="JDOMAIN"/>
</dbReference>
<dbReference type="SMART" id="SM00271">
    <property type="entry name" value="DnaJ"/>
    <property type="match status" value="1"/>
</dbReference>
<dbReference type="SUPFAM" id="SSF46565">
    <property type="entry name" value="Chaperone J-domain"/>
    <property type="match status" value="1"/>
</dbReference>
<dbReference type="PROSITE" id="PS50076">
    <property type="entry name" value="DNAJ_2"/>
    <property type="match status" value="1"/>
</dbReference>
<reference key="1">
    <citation type="journal article" date="2009" name="Science">
        <title>The genome sequence of taurine cattle: a window to ruminant biology and evolution.</title>
        <authorList>
            <consortium name="The bovine genome sequencing and analysis consortium"/>
        </authorList>
    </citation>
    <scope>NUCLEOTIDE SEQUENCE [LARGE SCALE GENOMIC DNA]</scope>
    <source>
        <strain>Hereford</strain>
    </source>
</reference>
<reference key="2">
    <citation type="submission" date="2006-06" db="EMBL/GenBank/DDBJ databases">
        <authorList>
            <consortium name="NIH - Mammalian Gene Collection (MGC) project"/>
        </authorList>
    </citation>
    <scope>NUCLEOTIDE SEQUENCE [LARGE SCALE MRNA] (ISOFORM 2)</scope>
    <source>
        <strain>Hereford</strain>
        <tissue>Ascending colon</tissue>
    </source>
</reference>
<evidence type="ECO:0000255" key="1"/>
<evidence type="ECO:0000255" key="2">
    <source>
        <dbReference type="PROSITE-ProRule" id="PRU00286"/>
    </source>
</evidence>
<evidence type="ECO:0000303" key="3">
    <source ref="2"/>
</evidence>
<evidence type="ECO:0000305" key="4"/>
<comment type="function">
    <text>May function as a co-chaperone.</text>
</comment>
<comment type="subcellular location">
    <subcellularLocation>
        <location evidence="4">Membrane</location>
        <topology evidence="4">Multi-pass membrane protein</topology>
    </subcellularLocation>
</comment>
<comment type="alternative products">
    <event type="alternative splicing"/>
    <isoform>
        <id>Q17QW0-1</id>
        <name>1</name>
        <sequence type="displayed"/>
    </isoform>
    <isoform>
        <id>Q17QW0-2</id>
        <name>2</name>
        <sequence type="described" ref="VSP_032459 VSP_032460"/>
    </isoform>
</comment>
<proteinExistence type="evidence at transcript level"/>
<keyword id="KW-0025">Alternative splicing</keyword>
<keyword id="KW-0143">Chaperone</keyword>
<keyword id="KW-0472">Membrane</keyword>
<keyword id="KW-1185">Reference proteome</keyword>
<keyword id="KW-0812">Transmembrane</keyword>
<keyword id="KW-1133">Transmembrane helix</keyword>
<sequence>MAKGLLMTYTLWAVGGPAGLHHLYLGRDSHALLWMLTLGGGGLGWLWEFWMLPSFVAQANRAQEQRQGSGRGTPPLSLIRFVAQMIVGMYFGLVALISLSFMASFYIVGLPLAVGLGVLLVAAVGNQTSDLKNTLGAAFLTSPIFYGRPIAILPISLAASITAQKHRRYKPSVGSETLSVRLYRLGLAYLAFTGPLVHSVLCHTAVTLSYVADTLGSFLSWFSFFPLLGRLLESVLLLPFRAWKLLVGDHGISSSYFQEWEKLYEFVHSFQDEKRQLALQVFGLSEGATNEEIHGRYRELVKTWHPDHNRYQMEEAQRRFLEIQAAYEVLRQPRKPRGSWRWEETSF</sequence>
<organism>
    <name type="scientific">Bos taurus</name>
    <name type="common">Bovine</name>
    <dbReference type="NCBI Taxonomy" id="9913"/>
    <lineage>
        <taxon>Eukaryota</taxon>
        <taxon>Metazoa</taxon>
        <taxon>Chordata</taxon>
        <taxon>Craniata</taxon>
        <taxon>Vertebrata</taxon>
        <taxon>Euteleostomi</taxon>
        <taxon>Mammalia</taxon>
        <taxon>Eutheria</taxon>
        <taxon>Laurasiatheria</taxon>
        <taxon>Artiodactyla</taxon>
        <taxon>Ruminantia</taxon>
        <taxon>Pecora</taxon>
        <taxon>Bovidae</taxon>
        <taxon>Bovinae</taxon>
        <taxon>Bos</taxon>
    </lineage>
</organism>
<accession>Q17QW0</accession>
<protein>
    <recommendedName>
        <fullName>DnaJ homolog subfamily C member 22</fullName>
    </recommendedName>
</protein>
<gene>
    <name type="primary">DNAJC22</name>
</gene>
<name>DJC22_BOVIN</name>
<feature type="chain" id="PRO_0000325861" description="DnaJ homolog subfamily C member 22">
    <location>
        <begin position="1"/>
        <end position="347"/>
    </location>
</feature>
<feature type="transmembrane region" description="Helical" evidence="1">
    <location>
        <begin position="5"/>
        <end position="25"/>
    </location>
</feature>
<feature type="transmembrane region" description="Helical" evidence="1">
    <location>
        <begin position="32"/>
        <end position="52"/>
    </location>
</feature>
<feature type="transmembrane region" description="Helical" evidence="1">
    <location>
        <begin position="81"/>
        <end position="101"/>
    </location>
</feature>
<feature type="transmembrane region" description="Helical" evidence="1">
    <location>
        <begin position="105"/>
        <end position="125"/>
    </location>
</feature>
<feature type="transmembrane region" description="Helical" evidence="1">
    <location>
        <begin position="135"/>
        <end position="155"/>
    </location>
</feature>
<feature type="transmembrane region" description="Helical" evidence="1">
    <location>
        <begin position="186"/>
        <end position="206"/>
    </location>
</feature>
<feature type="transmembrane region" description="Helical" evidence="1">
    <location>
        <begin position="218"/>
        <end position="238"/>
    </location>
</feature>
<feature type="domain" description="TM2" evidence="1">
    <location>
        <begin position="4"/>
        <end position="50"/>
    </location>
</feature>
<feature type="domain" description="J" evidence="2">
    <location>
        <begin position="277"/>
        <end position="347"/>
    </location>
</feature>
<feature type="splice variant" id="VSP_032459" description="In isoform 2." evidence="3">
    <original>FGLSEGATNEEIHGRY</original>
    <variation>RFLPSHCCLRWLQKLD</variation>
    <location>
        <begin position="282"/>
        <end position="297"/>
    </location>
</feature>
<feature type="splice variant" id="VSP_032460" description="In isoform 2." evidence="3">
    <location>
        <begin position="298"/>
        <end position="347"/>
    </location>
</feature>